<proteinExistence type="inferred from homology"/>
<name>CLPS_SALSV</name>
<accession>B4TRR1</accession>
<protein>
    <recommendedName>
        <fullName evidence="1">ATP-dependent Clp protease adapter protein ClpS</fullName>
    </recommendedName>
</protein>
<reference key="1">
    <citation type="journal article" date="2011" name="J. Bacteriol.">
        <title>Comparative genomics of 28 Salmonella enterica isolates: evidence for CRISPR-mediated adaptive sublineage evolution.</title>
        <authorList>
            <person name="Fricke W.F."/>
            <person name="Mammel M.K."/>
            <person name="McDermott P.F."/>
            <person name="Tartera C."/>
            <person name="White D.G."/>
            <person name="Leclerc J.E."/>
            <person name="Ravel J."/>
            <person name="Cebula T.A."/>
        </authorList>
    </citation>
    <scope>NUCLEOTIDE SEQUENCE [LARGE SCALE GENOMIC DNA]</scope>
    <source>
        <strain>CVM19633</strain>
    </source>
</reference>
<gene>
    <name evidence="1" type="primary">clpS</name>
    <name type="ordered locus">SeSA_A1062</name>
</gene>
<dbReference type="EMBL" id="CP001127">
    <property type="protein sequence ID" value="ACF89462.1"/>
    <property type="molecule type" value="Genomic_DNA"/>
</dbReference>
<dbReference type="RefSeq" id="WP_000520789.1">
    <property type="nucleotide sequence ID" value="NC_011094.1"/>
</dbReference>
<dbReference type="SMR" id="B4TRR1"/>
<dbReference type="KEGG" id="sew:SeSA_A1062"/>
<dbReference type="HOGENOM" id="CLU_134358_2_1_6"/>
<dbReference type="Proteomes" id="UP000001865">
    <property type="component" value="Chromosome"/>
</dbReference>
<dbReference type="GO" id="GO:0030163">
    <property type="term" value="P:protein catabolic process"/>
    <property type="evidence" value="ECO:0007669"/>
    <property type="project" value="InterPro"/>
</dbReference>
<dbReference type="GO" id="GO:0006508">
    <property type="term" value="P:proteolysis"/>
    <property type="evidence" value="ECO:0007669"/>
    <property type="project" value="UniProtKB-UniRule"/>
</dbReference>
<dbReference type="FunFam" id="3.30.1390.10:FF:000002">
    <property type="entry name" value="ATP-dependent Clp protease adapter protein ClpS"/>
    <property type="match status" value="1"/>
</dbReference>
<dbReference type="Gene3D" id="3.30.1390.10">
    <property type="match status" value="1"/>
</dbReference>
<dbReference type="HAMAP" id="MF_00302">
    <property type="entry name" value="ClpS"/>
    <property type="match status" value="1"/>
</dbReference>
<dbReference type="InterPro" id="IPR022935">
    <property type="entry name" value="ClpS"/>
</dbReference>
<dbReference type="InterPro" id="IPR003769">
    <property type="entry name" value="ClpS_core"/>
</dbReference>
<dbReference type="InterPro" id="IPR014719">
    <property type="entry name" value="Ribosomal_bL12_C/ClpS-like"/>
</dbReference>
<dbReference type="NCBIfam" id="NF000670">
    <property type="entry name" value="PRK00033.1-3"/>
    <property type="match status" value="1"/>
</dbReference>
<dbReference type="NCBIfam" id="NF000672">
    <property type="entry name" value="PRK00033.1-5"/>
    <property type="match status" value="1"/>
</dbReference>
<dbReference type="PANTHER" id="PTHR33473:SF19">
    <property type="entry name" value="ATP-DEPENDENT CLP PROTEASE ADAPTER PROTEIN CLPS"/>
    <property type="match status" value="1"/>
</dbReference>
<dbReference type="PANTHER" id="PTHR33473">
    <property type="entry name" value="ATP-DEPENDENT CLP PROTEASE ADAPTER PROTEIN CLPS1, CHLOROPLASTIC"/>
    <property type="match status" value="1"/>
</dbReference>
<dbReference type="Pfam" id="PF02617">
    <property type="entry name" value="ClpS"/>
    <property type="match status" value="1"/>
</dbReference>
<dbReference type="SUPFAM" id="SSF54736">
    <property type="entry name" value="ClpS-like"/>
    <property type="match status" value="1"/>
</dbReference>
<evidence type="ECO:0000255" key="1">
    <source>
        <dbReference type="HAMAP-Rule" id="MF_00302"/>
    </source>
</evidence>
<sequence length="106" mass="12152">MGKTNDWLDFDQLVEDSVRDALKPPSMYKVILVNDDYTPMEFVIDVLQKFFSYDVERATQLMLAVHYQGKAICGVFTAEVAETKVAMVNKYARENEHPLLCTLEKA</sequence>
<organism>
    <name type="scientific">Salmonella schwarzengrund (strain CVM19633)</name>
    <dbReference type="NCBI Taxonomy" id="439843"/>
    <lineage>
        <taxon>Bacteria</taxon>
        <taxon>Pseudomonadati</taxon>
        <taxon>Pseudomonadota</taxon>
        <taxon>Gammaproteobacteria</taxon>
        <taxon>Enterobacterales</taxon>
        <taxon>Enterobacteriaceae</taxon>
        <taxon>Salmonella</taxon>
    </lineage>
</organism>
<comment type="function">
    <text evidence="1">Involved in the modulation of the specificity of the ClpAP-mediated ATP-dependent protein degradation.</text>
</comment>
<comment type="subunit">
    <text evidence="1">Binds to the N-terminal domain of the chaperone ClpA.</text>
</comment>
<comment type="similarity">
    <text evidence="1">Belongs to the ClpS family.</text>
</comment>
<feature type="chain" id="PRO_1000115476" description="ATP-dependent Clp protease adapter protein ClpS">
    <location>
        <begin position="1"/>
        <end position="106"/>
    </location>
</feature>